<proteinExistence type="inferred from homology"/>
<reference key="1">
    <citation type="journal article" date="2003" name="Nature">
        <title>The genome sequence of Bacillus anthracis Ames and comparison to closely related bacteria.</title>
        <authorList>
            <person name="Read T.D."/>
            <person name="Peterson S.N."/>
            <person name="Tourasse N.J."/>
            <person name="Baillie L.W."/>
            <person name="Paulsen I.T."/>
            <person name="Nelson K.E."/>
            <person name="Tettelin H."/>
            <person name="Fouts D.E."/>
            <person name="Eisen J.A."/>
            <person name="Gill S.R."/>
            <person name="Holtzapple E.K."/>
            <person name="Okstad O.A."/>
            <person name="Helgason E."/>
            <person name="Rilstone J."/>
            <person name="Wu M."/>
            <person name="Kolonay J.F."/>
            <person name="Beanan M.J."/>
            <person name="Dodson R.J."/>
            <person name="Brinkac L.M."/>
            <person name="Gwinn M.L."/>
            <person name="DeBoy R.T."/>
            <person name="Madpu R."/>
            <person name="Daugherty S.C."/>
            <person name="Durkin A.S."/>
            <person name="Haft D.H."/>
            <person name="Nelson W.C."/>
            <person name="Peterson J.D."/>
            <person name="Pop M."/>
            <person name="Khouri H.M."/>
            <person name="Radune D."/>
            <person name="Benton J.L."/>
            <person name="Mahamoud Y."/>
            <person name="Jiang L."/>
            <person name="Hance I.R."/>
            <person name="Weidman J.F."/>
            <person name="Berry K.J."/>
            <person name="Plaut R.D."/>
            <person name="Wolf A.M."/>
            <person name="Watkins K.L."/>
            <person name="Nierman W.C."/>
            <person name="Hazen A."/>
            <person name="Cline R.T."/>
            <person name="Redmond C."/>
            <person name="Thwaite J.E."/>
            <person name="White O."/>
            <person name="Salzberg S.L."/>
            <person name="Thomason B."/>
            <person name="Friedlander A.M."/>
            <person name="Koehler T.M."/>
            <person name="Hanna P.C."/>
            <person name="Kolstoe A.-B."/>
            <person name="Fraser C.M."/>
        </authorList>
    </citation>
    <scope>NUCLEOTIDE SEQUENCE [LARGE SCALE GENOMIC DNA]</scope>
    <source>
        <strain>Ames / isolate Porton</strain>
    </source>
</reference>
<reference key="2">
    <citation type="submission" date="2004-01" db="EMBL/GenBank/DDBJ databases">
        <title>Complete genome sequence of Bacillus anthracis Sterne.</title>
        <authorList>
            <person name="Brettin T.S."/>
            <person name="Bruce D."/>
            <person name="Challacombe J.F."/>
            <person name="Gilna P."/>
            <person name="Han C."/>
            <person name="Hill K."/>
            <person name="Hitchcock P."/>
            <person name="Jackson P."/>
            <person name="Keim P."/>
            <person name="Longmire J."/>
            <person name="Lucas S."/>
            <person name="Okinaka R."/>
            <person name="Richardson P."/>
            <person name="Rubin E."/>
            <person name="Tice H."/>
        </authorList>
    </citation>
    <scope>NUCLEOTIDE SEQUENCE [LARGE SCALE GENOMIC DNA]</scope>
    <source>
        <strain>Sterne</strain>
    </source>
</reference>
<reference key="3">
    <citation type="journal article" date="2009" name="J. Bacteriol.">
        <title>The complete genome sequence of Bacillus anthracis Ames 'Ancestor'.</title>
        <authorList>
            <person name="Ravel J."/>
            <person name="Jiang L."/>
            <person name="Stanley S.T."/>
            <person name="Wilson M.R."/>
            <person name="Decker R.S."/>
            <person name="Read T.D."/>
            <person name="Worsham P."/>
            <person name="Keim P.S."/>
            <person name="Salzberg S.L."/>
            <person name="Fraser-Liggett C.M."/>
            <person name="Rasko D.A."/>
        </authorList>
    </citation>
    <scope>NUCLEOTIDE SEQUENCE [LARGE SCALE GENOMIC DNA]</scope>
    <source>
        <strain>Ames ancestor</strain>
    </source>
</reference>
<dbReference type="EMBL" id="AE016879">
    <property type="protein sequence ID" value="AAP24752.1"/>
    <property type="molecule type" value="Genomic_DNA"/>
</dbReference>
<dbReference type="EMBL" id="AE017334">
    <property type="protein sequence ID" value="AAT29848.1"/>
    <property type="molecule type" value="Genomic_DNA"/>
</dbReference>
<dbReference type="EMBL" id="AE017225">
    <property type="protein sequence ID" value="AAT53032.1"/>
    <property type="molecule type" value="Genomic_DNA"/>
</dbReference>
<dbReference type="RefSeq" id="NP_843266.1">
    <property type="nucleotide sequence ID" value="NC_003997.3"/>
</dbReference>
<dbReference type="RefSeq" id="WP_001085558.1">
    <property type="nucleotide sequence ID" value="NZ_WXXJ01000017.1"/>
</dbReference>
<dbReference type="RefSeq" id="YP_026981.1">
    <property type="nucleotide sequence ID" value="NC_005945.1"/>
</dbReference>
<dbReference type="SMR" id="Q81UW5"/>
<dbReference type="STRING" id="261594.GBAA_0741"/>
<dbReference type="DNASU" id="1088330"/>
<dbReference type="GeneID" id="45020820"/>
<dbReference type="KEGG" id="ban:BA_0741"/>
<dbReference type="KEGG" id="bar:GBAA_0741"/>
<dbReference type="KEGG" id="bat:BAS0705"/>
<dbReference type="PATRIC" id="fig|198094.11.peg.741"/>
<dbReference type="eggNOG" id="COG2156">
    <property type="taxonomic scope" value="Bacteria"/>
</dbReference>
<dbReference type="HOGENOM" id="CLU_077094_1_0_9"/>
<dbReference type="OMA" id="KYFWPRP"/>
<dbReference type="OrthoDB" id="9809491at2"/>
<dbReference type="Proteomes" id="UP000000427">
    <property type="component" value="Chromosome"/>
</dbReference>
<dbReference type="Proteomes" id="UP000000594">
    <property type="component" value="Chromosome"/>
</dbReference>
<dbReference type="GO" id="GO:0005886">
    <property type="term" value="C:plasma membrane"/>
    <property type="evidence" value="ECO:0007669"/>
    <property type="project" value="UniProtKB-SubCell"/>
</dbReference>
<dbReference type="GO" id="GO:0005524">
    <property type="term" value="F:ATP binding"/>
    <property type="evidence" value="ECO:0007669"/>
    <property type="project" value="UniProtKB-UniRule"/>
</dbReference>
<dbReference type="GO" id="GO:0008556">
    <property type="term" value="F:P-type potassium transmembrane transporter activity"/>
    <property type="evidence" value="ECO:0007669"/>
    <property type="project" value="InterPro"/>
</dbReference>
<dbReference type="HAMAP" id="MF_00276">
    <property type="entry name" value="KdpC"/>
    <property type="match status" value="1"/>
</dbReference>
<dbReference type="InterPro" id="IPR003820">
    <property type="entry name" value="KdpC"/>
</dbReference>
<dbReference type="NCBIfam" id="TIGR00681">
    <property type="entry name" value="kdpC"/>
    <property type="match status" value="1"/>
</dbReference>
<dbReference type="NCBIfam" id="NF001454">
    <property type="entry name" value="PRK00315.1"/>
    <property type="match status" value="1"/>
</dbReference>
<dbReference type="NCBIfam" id="NF010601">
    <property type="entry name" value="PRK13997.1"/>
    <property type="match status" value="1"/>
</dbReference>
<dbReference type="PANTHER" id="PTHR30042">
    <property type="entry name" value="POTASSIUM-TRANSPORTING ATPASE C CHAIN"/>
    <property type="match status" value="1"/>
</dbReference>
<dbReference type="PANTHER" id="PTHR30042:SF2">
    <property type="entry name" value="POTASSIUM-TRANSPORTING ATPASE KDPC SUBUNIT"/>
    <property type="match status" value="1"/>
</dbReference>
<dbReference type="Pfam" id="PF02669">
    <property type="entry name" value="KdpC"/>
    <property type="match status" value="1"/>
</dbReference>
<dbReference type="PIRSF" id="PIRSF001296">
    <property type="entry name" value="K_ATPase_KdpC"/>
    <property type="match status" value="1"/>
</dbReference>
<comment type="function">
    <text evidence="1">Part of the high-affinity ATP-driven potassium transport (or Kdp) system, which catalyzes the hydrolysis of ATP coupled with the electrogenic transport of potassium into the cytoplasm. This subunit acts as a catalytic chaperone that increases the ATP-binding affinity of the ATP-hydrolyzing subunit KdpB by the formation of a transient KdpB/KdpC/ATP ternary complex.</text>
</comment>
<comment type="subunit">
    <text evidence="1">The system is composed of three essential subunits: KdpA, KdpB and KdpC.</text>
</comment>
<comment type="subcellular location">
    <subcellularLocation>
        <location evidence="1">Cell membrane</location>
        <topology evidence="1">Single-pass membrane protein</topology>
    </subcellularLocation>
</comment>
<comment type="similarity">
    <text evidence="1">Belongs to the KdpC family.</text>
</comment>
<evidence type="ECO:0000255" key="1">
    <source>
        <dbReference type="HAMAP-Rule" id="MF_00276"/>
    </source>
</evidence>
<sequence>MAKKQSILSPIIRITFTFLVLCGLVYPLIVTGIAQAVMKDNADGSLIYNDKNEVIGSKLIGQNFTDPRYFHGRVSSIEYKAEASGSNNYAPSNPDLEKRVEKSIEEWKKQNPSVPVTEVPIDLVTNSGSGLDPDISPKAASVQVERISKLTNIPKETLDQLIKDQTEGAALGLFGETRVNVLKLNLGLQKIMK</sequence>
<feature type="chain" id="PRO_1000022256" description="Potassium-transporting ATPase KdpC subunit">
    <location>
        <begin position="1"/>
        <end position="193"/>
    </location>
</feature>
<feature type="transmembrane region" description="Helical" evidence="1">
    <location>
        <begin position="14"/>
        <end position="34"/>
    </location>
</feature>
<protein>
    <recommendedName>
        <fullName evidence="1">Potassium-transporting ATPase KdpC subunit</fullName>
    </recommendedName>
    <alternativeName>
        <fullName evidence="1">ATP phosphohydrolase [potassium-transporting] C chain</fullName>
    </alternativeName>
    <alternativeName>
        <fullName evidence="1">Potassium-binding and translocating subunit C</fullName>
    </alternativeName>
    <alternativeName>
        <fullName evidence="1">Potassium-translocating ATPase C chain</fullName>
    </alternativeName>
</protein>
<organism>
    <name type="scientific">Bacillus anthracis</name>
    <dbReference type="NCBI Taxonomy" id="1392"/>
    <lineage>
        <taxon>Bacteria</taxon>
        <taxon>Bacillati</taxon>
        <taxon>Bacillota</taxon>
        <taxon>Bacilli</taxon>
        <taxon>Bacillales</taxon>
        <taxon>Bacillaceae</taxon>
        <taxon>Bacillus</taxon>
        <taxon>Bacillus cereus group</taxon>
    </lineage>
</organism>
<accession>Q81UW5</accession>
<accession>Q6I349</accession>
<accession>Q6KWW7</accession>
<name>KDPC_BACAN</name>
<keyword id="KW-0067">ATP-binding</keyword>
<keyword id="KW-1003">Cell membrane</keyword>
<keyword id="KW-0406">Ion transport</keyword>
<keyword id="KW-0472">Membrane</keyword>
<keyword id="KW-0547">Nucleotide-binding</keyword>
<keyword id="KW-0630">Potassium</keyword>
<keyword id="KW-0633">Potassium transport</keyword>
<keyword id="KW-1185">Reference proteome</keyword>
<keyword id="KW-0812">Transmembrane</keyword>
<keyword id="KW-1133">Transmembrane helix</keyword>
<keyword id="KW-0813">Transport</keyword>
<gene>
    <name evidence="1" type="primary">kdpC</name>
    <name type="ordered locus">BA_0741</name>
    <name type="ordered locus">GBAA_0741</name>
    <name type="ordered locus">BAS0705</name>
</gene>